<gene>
    <name evidence="1" type="primary">ybeY</name>
    <name type="ordered locus">Cgl2287</name>
    <name type="ordered locus">cg2512</name>
</gene>
<name>YBEY_CORGL</name>
<organism>
    <name type="scientific">Corynebacterium glutamicum (strain ATCC 13032 / DSM 20300 / JCM 1318 / BCRC 11384 / CCUG 27702 / LMG 3730 / NBRC 12168 / NCIMB 10025 / NRRL B-2784 / 534)</name>
    <dbReference type="NCBI Taxonomy" id="196627"/>
    <lineage>
        <taxon>Bacteria</taxon>
        <taxon>Bacillati</taxon>
        <taxon>Actinomycetota</taxon>
        <taxon>Actinomycetes</taxon>
        <taxon>Mycobacteriales</taxon>
        <taxon>Corynebacteriaceae</taxon>
        <taxon>Corynebacterium</taxon>
    </lineage>
</organism>
<protein>
    <recommendedName>
        <fullName evidence="1">Endoribonuclease YbeY</fullName>
        <ecNumber evidence="1">3.1.-.-</ecNumber>
    </recommendedName>
</protein>
<comment type="function">
    <text evidence="1">Single strand-specific metallo-endoribonuclease involved in late-stage 70S ribosome quality control and in maturation of the 3' terminus of the 16S rRNA.</text>
</comment>
<comment type="cofactor">
    <cofactor evidence="1">
        <name>Zn(2+)</name>
        <dbReference type="ChEBI" id="CHEBI:29105"/>
    </cofactor>
    <text evidence="1">Binds 1 zinc ion.</text>
</comment>
<comment type="subcellular location">
    <subcellularLocation>
        <location evidence="1">Cytoplasm</location>
    </subcellularLocation>
</comment>
<comment type="similarity">
    <text evidence="1">Belongs to the endoribonuclease YbeY family.</text>
</comment>
<keyword id="KW-0963">Cytoplasm</keyword>
<keyword id="KW-0255">Endonuclease</keyword>
<keyword id="KW-0378">Hydrolase</keyword>
<keyword id="KW-0479">Metal-binding</keyword>
<keyword id="KW-0540">Nuclease</keyword>
<keyword id="KW-1185">Reference proteome</keyword>
<keyword id="KW-0690">Ribosome biogenesis</keyword>
<keyword id="KW-0698">rRNA processing</keyword>
<keyword id="KW-0862">Zinc</keyword>
<dbReference type="EC" id="3.1.-.-" evidence="1"/>
<dbReference type="EMBL" id="BA000036">
    <property type="protein sequence ID" value="BAB99680.1"/>
    <property type="molecule type" value="Genomic_DNA"/>
</dbReference>
<dbReference type="EMBL" id="BX927154">
    <property type="protein sequence ID" value="CAF20629.1"/>
    <property type="molecule type" value="Genomic_DNA"/>
</dbReference>
<dbReference type="RefSeq" id="NP_601487.1">
    <property type="nucleotide sequence ID" value="NC_003450.3"/>
</dbReference>
<dbReference type="RefSeq" id="WP_011015012.1">
    <property type="nucleotide sequence ID" value="NC_006958.1"/>
</dbReference>
<dbReference type="SMR" id="Q8NNB7"/>
<dbReference type="STRING" id="196627.cg2512"/>
<dbReference type="GeneID" id="1020240"/>
<dbReference type="KEGG" id="cgb:cg2512"/>
<dbReference type="KEGG" id="cgl:Cgl2287"/>
<dbReference type="PATRIC" id="fig|196627.13.peg.2221"/>
<dbReference type="eggNOG" id="COG0319">
    <property type="taxonomic scope" value="Bacteria"/>
</dbReference>
<dbReference type="HOGENOM" id="CLU_106710_3_2_11"/>
<dbReference type="OrthoDB" id="9807740at2"/>
<dbReference type="BioCyc" id="CORYNE:G18NG-11884-MONOMER"/>
<dbReference type="Proteomes" id="UP000000582">
    <property type="component" value="Chromosome"/>
</dbReference>
<dbReference type="Proteomes" id="UP000001009">
    <property type="component" value="Chromosome"/>
</dbReference>
<dbReference type="GO" id="GO:0005737">
    <property type="term" value="C:cytoplasm"/>
    <property type="evidence" value="ECO:0007669"/>
    <property type="project" value="UniProtKB-SubCell"/>
</dbReference>
<dbReference type="GO" id="GO:0004222">
    <property type="term" value="F:metalloendopeptidase activity"/>
    <property type="evidence" value="ECO:0007669"/>
    <property type="project" value="InterPro"/>
</dbReference>
<dbReference type="GO" id="GO:0004521">
    <property type="term" value="F:RNA endonuclease activity"/>
    <property type="evidence" value="ECO:0007669"/>
    <property type="project" value="UniProtKB-UniRule"/>
</dbReference>
<dbReference type="GO" id="GO:0008270">
    <property type="term" value="F:zinc ion binding"/>
    <property type="evidence" value="ECO:0007669"/>
    <property type="project" value="UniProtKB-UniRule"/>
</dbReference>
<dbReference type="GO" id="GO:0006364">
    <property type="term" value="P:rRNA processing"/>
    <property type="evidence" value="ECO:0007669"/>
    <property type="project" value="UniProtKB-UniRule"/>
</dbReference>
<dbReference type="Gene3D" id="3.40.390.30">
    <property type="entry name" value="Metalloproteases ('zincins'), catalytic domain"/>
    <property type="match status" value="1"/>
</dbReference>
<dbReference type="HAMAP" id="MF_00009">
    <property type="entry name" value="Endoribonucl_YbeY"/>
    <property type="match status" value="1"/>
</dbReference>
<dbReference type="InterPro" id="IPR023091">
    <property type="entry name" value="MetalPrtase_cat_dom_sf_prd"/>
</dbReference>
<dbReference type="InterPro" id="IPR002036">
    <property type="entry name" value="YbeY"/>
</dbReference>
<dbReference type="InterPro" id="IPR020549">
    <property type="entry name" value="YbeY_CS"/>
</dbReference>
<dbReference type="NCBIfam" id="TIGR00043">
    <property type="entry name" value="rRNA maturation RNase YbeY"/>
    <property type="match status" value="1"/>
</dbReference>
<dbReference type="PANTHER" id="PTHR46986">
    <property type="entry name" value="ENDORIBONUCLEASE YBEY, CHLOROPLASTIC"/>
    <property type="match status" value="1"/>
</dbReference>
<dbReference type="PANTHER" id="PTHR46986:SF1">
    <property type="entry name" value="ENDORIBONUCLEASE YBEY, CHLOROPLASTIC"/>
    <property type="match status" value="1"/>
</dbReference>
<dbReference type="Pfam" id="PF02130">
    <property type="entry name" value="YbeY"/>
    <property type="match status" value="1"/>
</dbReference>
<dbReference type="SUPFAM" id="SSF55486">
    <property type="entry name" value="Metalloproteases ('zincins'), catalytic domain"/>
    <property type="match status" value="1"/>
</dbReference>
<dbReference type="PROSITE" id="PS01306">
    <property type="entry name" value="UPF0054"/>
    <property type="match status" value="1"/>
</dbReference>
<proteinExistence type="inferred from homology"/>
<accession>Q8NNB7</accession>
<evidence type="ECO:0000255" key="1">
    <source>
        <dbReference type="HAMAP-Rule" id="MF_00009"/>
    </source>
</evidence>
<reference key="1">
    <citation type="journal article" date="2003" name="Appl. Microbiol. Biotechnol.">
        <title>The Corynebacterium glutamicum genome: features and impacts on biotechnological processes.</title>
        <authorList>
            <person name="Ikeda M."/>
            <person name="Nakagawa S."/>
        </authorList>
    </citation>
    <scope>NUCLEOTIDE SEQUENCE [LARGE SCALE GENOMIC DNA]</scope>
    <source>
        <strain>ATCC 13032 / DSM 20300 / JCM 1318 / BCRC 11384 / CCUG 27702 / LMG 3730 / NBRC 12168 / NCIMB 10025 / NRRL B-2784 / 534</strain>
    </source>
</reference>
<reference key="2">
    <citation type="journal article" date="2003" name="J. Biotechnol.">
        <title>The complete Corynebacterium glutamicum ATCC 13032 genome sequence and its impact on the production of L-aspartate-derived amino acids and vitamins.</title>
        <authorList>
            <person name="Kalinowski J."/>
            <person name="Bathe B."/>
            <person name="Bartels D."/>
            <person name="Bischoff N."/>
            <person name="Bott M."/>
            <person name="Burkovski A."/>
            <person name="Dusch N."/>
            <person name="Eggeling L."/>
            <person name="Eikmanns B.J."/>
            <person name="Gaigalat L."/>
            <person name="Goesmann A."/>
            <person name="Hartmann M."/>
            <person name="Huthmacher K."/>
            <person name="Kraemer R."/>
            <person name="Linke B."/>
            <person name="McHardy A.C."/>
            <person name="Meyer F."/>
            <person name="Moeckel B."/>
            <person name="Pfefferle W."/>
            <person name="Puehler A."/>
            <person name="Rey D.A."/>
            <person name="Rueckert C."/>
            <person name="Rupp O."/>
            <person name="Sahm H."/>
            <person name="Wendisch V.F."/>
            <person name="Wiegraebe I."/>
            <person name="Tauch A."/>
        </authorList>
    </citation>
    <scope>NUCLEOTIDE SEQUENCE [LARGE SCALE GENOMIC DNA]</scope>
    <source>
        <strain>ATCC 13032 / DSM 20300 / JCM 1318 / BCRC 11384 / CCUG 27702 / LMG 3730 / NBRC 12168 / NCIMB 10025 / NRRL B-2784 / 534</strain>
    </source>
</reference>
<feature type="chain" id="PRO_0000102445" description="Endoribonuclease YbeY">
    <location>
        <begin position="1"/>
        <end position="196"/>
    </location>
</feature>
<feature type="binding site" evidence="1">
    <location>
        <position position="120"/>
    </location>
    <ligand>
        <name>Zn(2+)</name>
        <dbReference type="ChEBI" id="CHEBI:29105"/>
        <note>catalytic</note>
    </ligand>
</feature>
<feature type="binding site" evidence="1">
    <location>
        <position position="124"/>
    </location>
    <ligand>
        <name>Zn(2+)</name>
        <dbReference type="ChEBI" id="CHEBI:29105"/>
        <note>catalytic</note>
    </ligand>
</feature>
<feature type="binding site" evidence="1">
    <location>
        <position position="130"/>
    </location>
    <ligand>
        <name>Zn(2+)</name>
        <dbReference type="ChEBI" id="CHEBI:29105"/>
        <note>catalytic</note>
    </ligand>
</feature>
<sequence>MSIEVFNESGYDGVNEEMLIDVLSFALGEMDIHPDAEASIHIVDVDTIADLHVKWLDLEGPTDVMSFPMDELTPGYSRPDGATPGPAMLGDIVLCPEFAAKQATKAGHDLAHELALLTVHGSLHLLGYDHVDPAEEREMFALQNELLADWYDNVEARGVTYQPKPSGAGAFPTAADRLELDEKMEADDSGFGGVES</sequence>